<reference key="1">
    <citation type="journal article" date="2005" name="Proc. Natl. Acad. Sci. U.S.A.">
        <title>Comparison of the complete genome sequences of Pseudomonas syringae pv. syringae B728a and pv. tomato DC3000.</title>
        <authorList>
            <person name="Feil H."/>
            <person name="Feil W.S."/>
            <person name="Chain P."/>
            <person name="Larimer F."/>
            <person name="Dibartolo G."/>
            <person name="Copeland A."/>
            <person name="Lykidis A."/>
            <person name="Trong S."/>
            <person name="Nolan M."/>
            <person name="Goltsman E."/>
            <person name="Thiel J."/>
            <person name="Malfatti S."/>
            <person name="Loper J.E."/>
            <person name="Lapidus A."/>
            <person name="Detter J.C."/>
            <person name="Land M."/>
            <person name="Richardson P.M."/>
            <person name="Kyrpides N.C."/>
            <person name="Ivanova N."/>
            <person name="Lindow S.E."/>
        </authorList>
    </citation>
    <scope>NUCLEOTIDE SEQUENCE [LARGE SCALE GENOMIC DNA]</scope>
    <source>
        <strain>B728a</strain>
    </source>
</reference>
<organism>
    <name type="scientific">Pseudomonas syringae pv. syringae (strain B728a)</name>
    <dbReference type="NCBI Taxonomy" id="205918"/>
    <lineage>
        <taxon>Bacteria</taxon>
        <taxon>Pseudomonadati</taxon>
        <taxon>Pseudomonadota</taxon>
        <taxon>Gammaproteobacteria</taxon>
        <taxon>Pseudomonadales</taxon>
        <taxon>Pseudomonadaceae</taxon>
        <taxon>Pseudomonas</taxon>
        <taxon>Pseudomonas syringae</taxon>
    </lineage>
</organism>
<feature type="chain" id="PRO_1000013590" description="Protein RnfH">
    <location>
        <begin position="1"/>
        <end position="104"/>
    </location>
</feature>
<proteinExistence type="inferred from homology"/>
<gene>
    <name evidence="1" type="primary">rnfH</name>
    <name type="ordered locus">Psyr_4200</name>
</gene>
<dbReference type="EMBL" id="CP000075">
    <property type="protein sequence ID" value="AAY39230.1"/>
    <property type="molecule type" value="Genomic_DNA"/>
</dbReference>
<dbReference type="RefSeq" id="WP_011268885.1">
    <property type="nucleotide sequence ID" value="NC_007005.1"/>
</dbReference>
<dbReference type="RefSeq" id="YP_237268.1">
    <property type="nucleotide sequence ID" value="NC_007005.1"/>
</dbReference>
<dbReference type="SMR" id="Q4ZNP2"/>
<dbReference type="STRING" id="205918.Psyr_4200"/>
<dbReference type="KEGG" id="psb:Psyr_4200"/>
<dbReference type="PATRIC" id="fig|205918.7.peg.4327"/>
<dbReference type="eggNOG" id="COG2914">
    <property type="taxonomic scope" value="Bacteria"/>
</dbReference>
<dbReference type="HOGENOM" id="CLU_150721_1_0_6"/>
<dbReference type="OrthoDB" id="9796575at2"/>
<dbReference type="Proteomes" id="UP000000426">
    <property type="component" value="Chromosome"/>
</dbReference>
<dbReference type="Gene3D" id="3.10.20.280">
    <property type="entry name" value="RnfH-like"/>
    <property type="match status" value="1"/>
</dbReference>
<dbReference type="HAMAP" id="MF_00460">
    <property type="entry name" value="UPF0125_RnfH"/>
    <property type="match status" value="1"/>
</dbReference>
<dbReference type="InterPro" id="IPR016155">
    <property type="entry name" value="Mopterin_synth/thiamin_S_b"/>
</dbReference>
<dbReference type="InterPro" id="IPR005346">
    <property type="entry name" value="RnfH"/>
</dbReference>
<dbReference type="InterPro" id="IPR037021">
    <property type="entry name" value="RnfH_sf"/>
</dbReference>
<dbReference type="NCBIfam" id="NF002490">
    <property type="entry name" value="PRK01777.1"/>
    <property type="match status" value="1"/>
</dbReference>
<dbReference type="PANTHER" id="PTHR37483">
    <property type="entry name" value="UPF0125 PROTEIN RATB"/>
    <property type="match status" value="1"/>
</dbReference>
<dbReference type="PANTHER" id="PTHR37483:SF1">
    <property type="entry name" value="UPF0125 PROTEIN RATB"/>
    <property type="match status" value="1"/>
</dbReference>
<dbReference type="Pfam" id="PF03658">
    <property type="entry name" value="Ub-RnfH"/>
    <property type="match status" value="1"/>
</dbReference>
<dbReference type="SUPFAM" id="SSF54285">
    <property type="entry name" value="MoaD/ThiS"/>
    <property type="match status" value="1"/>
</dbReference>
<sequence>MADASIQIEVVYASVQRQVLKTVDVPTGSSVRQALALSGIDKEFPELDLSQCAVGIFGKVVTDPAARVLEAGERIEIYRLLVADPMEIRRLRAARAREKRGLPG</sequence>
<evidence type="ECO:0000255" key="1">
    <source>
        <dbReference type="HAMAP-Rule" id="MF_00460"/>
    </source>
</evidence>
<name>RNFH_PSEU2</name>
<protein>
    <recommendedName>
        <fullName evidence="1">Protein RnfH</fullName>
    </recommendedName>
</protein>
<accession>Q4ZNP2</accession>
<comment type="similarity">
    <text evidence="1">Belongs to the UPF0125 (RnfH) family.</text>
</comment>